<dbReference type="EMBL" id="AL157959">
    <property type="protein sequence ID" value="CAM07423.1"/>
    <property type="molecule type" value="Genomic_DNA"/>
</dbReference>
<dbReference type="RefSeq" id="WP_002216249.1">
    <property type="nucleotide sequence ID" value="NC_003116.1"/>
</dbReference>
<dbReference type="SMR" id="P66354"/>
<dbReference type="EnsemblBacteria" id="CAM07423">
    <property type="protein sequence ID" value="CAM07423"/>
    <property type="gene ID" value="NMA0105"/>
</dbReference>
<dbReference type="GeneID" id="94582061"/>
<dbReference type="KEGG" id="nma:NMA0105"/>
<dbReference type="HOGENOM" id="CLU_072439_5_0_4"/>
<dbReference type="Proteomes" id="UP000000626">
    <property type="component" value="Chromosome"/>
</dbReference>
<dbReference type="GO" id="GO:1990904">
    <property type="term" value="C:ribonucleoprotein complex"/>
    <property type="evidence" value="ECO:0007669"/>
    <property type="project" value="UniProtKB-KW"/>
</dbReference>
<dbReference type="GO" id="GO:0005840">
    <property type="term" value="C:ribosome"/>
    <property type="evidence" value="ECO:0007669"/>
    <property type="project" value="UniProtKB-KW"/>
</dbReference>
<dbReference type="GO" id="GO:0019843">
    <property type="term" value="F:rRNA binding"/>
    <property type="evidence" value="ECO:0007669"/>
    <property type="project" value="UniProtKB-UniRule"/>
</dbReference>
<dbReference type="GO" id="GO:0003735">
    <property type="term" value="F:structural constituent of ribosome"/>
    <property type="evidence" value="ECO:0007669"/>
    <property type="project" value="InterPro"/>
</dbReference>
<dbReference type="GO" id="GO:0006412">
    <property type="term" value="P:translation"/>
    <property type="evidence" value="ECO:0007669"/>
    <property type="project" value="UniProtKB-UniRule"/>
</dbReference>
<dbReference type="FunFam" id="3.30.420.80:FF:000001">
    <property type="entry name" value="30S ribosomal protein S11"/>
    <property type="match status" value="1"/>
</dbReference>
<dbReference type="Gene3D" id="3.30.420.80">
    <property type="entry name" value="Ribosomal protein S11"/>
    <property type="match status" value="1"/>
</dbReference>
<dbReference type="HAMAP" id="MF_01310">
    <property type="entry name" value="Ribosomal_uS11"/>
    <property type="match status" value="1"/>
</dbReference>
<dbReference type="InterPro" id="IPR001971">
    <property type="entry name" value="Ribosomal_uS11"/>
</dbReference>
<dbReference type="InterPro" id="IPR019981">
    <property type="entry name" value="Ribosomal_uS11_bac-type"/>
</dbReference>
<dbReference type="InterPro" id="IPR018102">
    <property type="entry name" value="Ribosomal_uS11_CS"/>
</dbReference>
<dbReference type="InterPro" id="IPR036967">
    <property type="entry name" value="Ribosomal_uS11_sf"/>
</dbReference>
<dbReference type="NCBIfam" id="NF003698">
    <property type="entry name" value="PRK05309.1"/>
    <property type="match status" value="1"/>
</dbReference>
<dbReference type="NCBIfam" id="TIGR03632">
    <property type="entry name" value="uS11_bact"/>
    <property type="match status" value="1"/>
</dbReference>
<dbReference type="PANTHER" id="PTHR11759">
    <property type="entry name" value="40S RIBOSOMAL PROTEIN S14/30S RIBOSOMAL PROTEIN S11"/>
    <property type="match status" value="1"/>
</dbReference>
<dbReference type="Pfam" id="PF00411">
    <property type="entry name" value="Ribosomal_S11"/>
    <property type="match status" value="1"/>
</dbReference>
<dbReference type="PIRSF" id="PIRSF002131">
    <property type="entry name" value="Ribosomal_S11"/>
    <property type="match status" value="1"/>
</dbReference>
<dbReference type="SUPFAM" id="SSF53137">
    <property type="entry name" value="Translational machinery components"/>
    <property type="match status" value="1"/>
</dbReference>
<dbReference type="PROSITE" id="PS00054">
    <property type="entry name" value="RIBOSOMAL_S11"/>
    <property type="match status" value="1"/>
</dbReference>
<name>RS11_NEIMA</name>
<organism>
    <name type="scientific">Neisseria meningitidis serogroup A / serotype 4A (strain DSM 15465 / Z2491)</name>
    <dbReference type="NCBI Taxonomy" id="122587"/>
    <lineage>
        <taxon>Bacteria</taxon>
        <taxon>Pseudomonadati</taxon>
        <taxon>Pseudomonadota</taxon>
        <taxon>Betaproteobacteria</taxon>
        <taxon>Neisseriales</taxon>
        <taxon>Neisseriaceae</taxon>
        <taxon>Neisseria</taxon>
    </lineage>
</organism>
<reference key="1">
    <citation type="journal article" date="2000" name="Nature">
        <title>Complete DNA sequence of a serogroup A strain of Neisseria meningitidis Z2491.</title>
        <authorList>
            <person name="Parkhill J."/>
            <person name="Achtman M."/>
            <person name="James K.D."/>
            <person name="Bentley S.D."/>
            <person name="Churcher C.M."/>
            <person name="Klee S.R."/>
            <person name="Morelli G."/>
            <person name="Basham D."/>
            <person name="Brown D."/>
            <person name="Chillingworth T."/>
            <person name="Davies R.M."/>
            <person name="Davis P."/>
            <person name="Devlin K."/>
            <person name="Feltwell T."/>
            <person name="Hamlin N."/>
            <person name="Holroyd S."/>
            <person name="Jagels K."/>
            <person name="Leather S."/>
            <person name="Moule S."/>
            <person name="Mungall K.L."/>
            <person name="Quail M.A."/>
            <person name="Rajandream M.A."/>
            <person name="Rutherford K.M."/>
            <person name="Simmonds M."/>
            <person name="Skelton J."/>
            <person name="Whitehead S."/>
            <person name="Spratt B.G."/>
            <person name="Barrell B.G."/>
        </authorList>
    </citation>
    <scope>NUCLEOTIDE SEQUENCE [LARGE SCALE GENOMIC DNA]</scope>
    <source>
        <strain>DSM 15465 / Z2491</strain>
    </source>
</reference>
<proteinExistence type="inferred from homology"/>
<sequence length="131" mass="13919">MAKANTASRVRKKVRKTVSEGIVHVHASFNNTIITITDRQGNALSWATSGGAGFKGSRKSTPFAAQVAAEAAGKVAQEYGVKNLEVRIKGPGPGRESSVRALNALGFKITSITDVTPLPHNGCRPPKKRRI</sequence>
<keyword id="KW-0687">Ribonucleoprotein</keyword>
<keyword id="KW-0689">Ribosomal protein</keyword>
<keyword id="KW-0694">RNA-binding</keyword>
<keyword id="KW-0699">rRNA-binding</keyword>
<comment type="function">
    <text evidence="1">Located on the platform of the 30S subunit, it bridges several disparate RNA helices of the 16S rRNA. Forms part of the Shine-Dalgarno cleft in the 70S ribosome.</text>
</comment>
<comment type="subunit">
    <text evidence="1">Part of the 30S ribosomal subunit. Interacts with proteins S7 and S18. Binds to IF-3.</text>
</comment>
<comment type="similarity">
    <text evidence="1">Belongs to the universal ribosomal protein uS11 family.</text>
</comment>
<gene>
    <name evidence="1" type="primary">rpsK</name>
    <name type="ordered locus">NMA0105</name>
</gene>
<feature type="chain" id="PRO_0000123186" description="Small ribosomal subunit protein uS11">
    <location>
        <begin position="1"/>
        <end position="131"/>
    </location>
</feature>
<protein>
    <recommendedName>
        <fullName evidence="1">Small ribosomal subunit protein uS11</fullName>
    </recommendedName>
    <alternativeName>
        <fullName evidence="2">30S ribosomal protein S11</fullName>
    </alternativeName>
</protein>
<evidence type="ECO:0000255" key="1">
    <source>
        <dbReference type="HAMAP-Rule" id="MF_01310"/>
    </source>
</evidence>
<evidence type="ECO:0000305" key="2"/>
<accession>P66354</accession>
<accession>A1INW6</accession>
<accession>Q9JQR2</accession>